<comment type="function">
    <text evidence="1">Participates actively in the response to hyperosmotic and heat shock by preventing the aggregation of stress-denatured proteins and by disaggregating proteins, also in an autonomous, DnaK-independent fashion. Unfolded proteins bind initially to DnaJ; upon interaction with the DnaJ-bound protein, DnaK hydrolyzes its bound ATP, resulting in the formation of a stable complex. GrpE releases ADP from DnaK; ATP binding to DnaK triggers the release of the substrate protein, thus completing the reaction cycle. Several rounds of ATP-dependent interactions between DnaJ, DnaK and GrpE are required for fully efficient folding. Also involved, together with DnaK and GrpE, in the DNA replication of plasmids through activation of initiation proteins.</text>
</comment>
<comment type="cofactor">
    <cofactor evidence="1">
        <name>Zn(2+)</name>
        <dbReference type="ChEBI" id="CHEBI:29105"/>
    </cofactor>
    <text evidence="1">Binds 2 Zn(2+) ions per monomer.</text>
</comment>
<comment type="subunit">
    <text evidence="1">Homodimer.</text>
</comment>
<comment type="subcellular location">
    <subcellularLocation>
        <location evidence="1">Cytoplasm</location>
    </subcellularLocation>
</comment>
<comment type="domain">
    <text evidence="1">The J domain is necessary and sufficient to stimulate DnaK ATPase activity. Zinc center 1 plays an important role in the autonomous, DnaK-independent chaperone activity of DnaJ. Zinc center 2 is essential for interaction with DnaK and for DnaJ activity.</text>
</comment>
<comment type="similarity">
    <text evidence="1">Belongs to the DnaJ family.</text>
</comment>
<dbReference type="EMBL" id="AE006914">
    <property type="protein sequence ID" value="AAL02770.1"/>
    <property type="molecule type" value="Genomic_DNA"/>
</dbReference>
<dbReference type="PIR" id="H97728">
    <property type="entry name" value="H97728"/>
</dbReference>
<dbReference type="RefSeq" id="WP_004996543.1">
    <property type="nucleotide sequence ID" value="NC_003103.1"/>
</dbReference>
<dbReference type="SMR" id="Q92J37"/>
<dbReference type="GeneID" id="95361940"/>
<dbReference type="KEGG" id="rco:RC0232"/>
<dbReference type="HOGENOM" id="CLU_017633_0_7_5"/>
<dbReference type="Proteomes" id="UP000000816">
    <property type="component" value="Chromosome"/>
</dbReference>
<dbReference type="GO" id="GO:0005737">
    <property type="term" value="C:cytoplasm"/>
    <property type="evidence" value="ECO:0007669"/>
    <property type="project" value="UniProtKB-SubCell"/>
</dbReference>
<dbReference type="GO" id="GO:0005524">
    <property type="term" value="F:ATP binding"/>
    <property type="evidence" value="ECO:0007669"/>
    <property type="project" value="InterPro"/>
</dbReference>
<dbReference type="GO" id="GO:0031072">
    <property type="term" value="F:heat shock protein binding"/>
    <property type="evidence" value="ECO:0007669"/>
    <property type="project" value="InterPro"/>
</dbReference>
<dbReference type="GO" id="GO:0051082">
    <property type="term" value="F:unfolded protein binding"/>
    <property type="evidence" value="ECO:0007669"/>
    <property type="project" value="UniProtKB-UniRule"/>
</dbReference>
<dbReference type="GO" id="GO:0008270">
    <property type="term" value="F:zinc ion binding"/>
    <property type="evidence" value="ECO:0007669"/>
    <property type="project" value="UniProtKB-UniRule"/>
</dbReference>
<dbReference type="GO" id="GO:0051085">
    <property type="term" value="P:chaperone cofactor-dependent protein refolding"/>
    <property type="evidence" value="ECO:0007669"/>
    <property type="project" value="TreeGrafter"/>
</dbReference>
<dbReference type="GO" id="GO:0006260">
    <property type="term" value="P:DNA replication"/>
    <property type="evidence" value="ECO:0007669"/>
    <property type="project" value="UniProtKB-KW"/>
</dbReference>
<dbReference type="GO" id="GO:0042026">
    <property type="term" value="P:protein refolding"/>
    <property type="evidence" value="ECO:0007669"/>
    <property type="project" value="TreeGrafter"/>
</dbReference>
<dbReference type="GO" id="GO:0009408">
    <property type="term" value="P:response to heat"/>
    <property type="evidence" value="ECO:0007669"/>
    <property type="project" value="InterPro"/>
</dbReference>
<dbReference type="CDD" id="cd06257">
    <property type="entry name" value="DnaJ"/>
    <property type="match status" value="1"/>
</dbReference>
<dbReference type="CDD" id="cd10747">
    <property type="entry name" value="DnaJ_C"/>
    <property type="match status" value="1"/>
</dbReference>
<dbReference type="CDD" id="cd10719">
    <property type="entry name" value="DnaJ_zf"/>
    <property type="match status" value="1"/>
</dbReference>
<dbReference type="FunFam" id="1.10.287.110:FF:000153">
    <property type="entry name" value="Chaperone protein DnaJ"/>
    <property type="match status" value="1"/>
</dbReference>
<dbReference type="FunFam" id="2.10.230.10:FF:000002">
    <property type="entry name" value="Molecular chaperone DnaJ"/>
    <property type="match status" value="1"/>
</dbReference>
<dbReference type="FunFam" id="2.60.260.20:FF:000004">
    <property type="entry name" value="Molecular chaperone DnaJ"/>
    <property type="match status" value="1"/>
</dbReference>
<dbReference type="Gene3D" id="1.10.287.110">
    <property type="entry name" value="DnaJ domain"/>
    <property type="match status" value="1"/>
</dbReference>
<dbReference type="Gene3D" id="2.10.230.10">
    <property type="entry name" value="Heat shock protein DnaJ, cysteine-rich domain"/>
    <property type="match status" value="1"/>
</dbReference>
<dbReference type="Gene3D" id="2.60.260.20">
    <property type="entry name" value="Urease metallochaperone UreE, N-terminal domain"/>
    <property type="match status" value="2"/>
</dbReference>
<dbReference type="HAMAP" id="MF_01152">
    <property type="entry name" value="DnaJ"/>
    <property type="match status" value="1"/>
</dbReference>
<dbReference type="InterPro" id="IPR012724">
    <property type="entry name" value="DnaJ"/>
</dbReference>
<dbReference type="InterPro" id="IPR002939">
    <property type="entry name" value="DnaJ_C"/>
</dbReference>
<dbReference type="InterPro" id="IPR001623">
    <property type="entry name" value="DnaJ_domain"/>
</dbReference>
<dbReference type="InterPro" id="IPR018253">
    <property type="entry name" value="DnaJ_domain_CS"/>
</dbReference>
<dbReference type="InterPro" id="IPR008971">
    <property type="entry name" value="HSP40/DnaJ_pept-bd"/>
</dbReference>
<dbReference type="InterPro" id="IPR001305">
    <property type="entry name" value="HSP_DnaJ_Cys-rich_dom"/>
</dbReference>
<dbReference type="InterPro" id="IPR036410">
    <property type="entry name" value="HSP_DnaJ_Cys-rich_dom_sf"/>
</dbReference>
<dbReference type="InterPro" id="IPR036869">
    <property type="entry name" value="J_dom_sf"/>
</dbReference>
<dbReference type="NCBIfam" id="TIGR02349">
    <property type="entry name" value="DnaJ_bact"/>
    <property type="match status" value="1"/>
</dbReference>
<dbReference type="NCBIfam" id="NF008035">
    <property type="entry name" value="PRK10767.1"/>
    <property type="match status" value="1"/>
</dbReference>
<dbReference type="NCBIfam" id="NF010893">
    <property type="entry name" value="PRK14300.1"/>
    <property type="match status" value="1"/>
</dbReference>
<dbReference type="PANTHER" id="PTHR43096">
    <property type="entry name" value="DNAJ HOMOLOG 1, MITOCHONDRIAL-RELATED"/>
    <property type="match status" value="1"/>
</dbReference>
<dbReference type="PANTHER" id="PTHR43096:SF52">
    <property type="entry name" value="DNAJ HOMOLOG 1, MITOCHONDRIAL-RELATED"/>
    <property type="match status" value="1"/>
</dbReference>
<dbReference type="Pfam" id="PF00226">
    <property type="entry name" value="DnaJ"/>
    <property type="match status" value="1"/>
</dbReference>
<dbReference type="Pfam" id="PF01556">
    <property type="entry name" value="DnaJ_C"/>
    <property type="match status" value="1"/>
</dbReference>
<dbReference type="Pfam" id="PF00684">
    <property type="entry name" value="DnaJ_CXXCXGXG"/>
    <property type="match status" value="1"/>
</dbReference>
<dbReference type="PRINTS" id="PR00625">
    <property type="entry name" value="JDOMAIN"/>
</dbReference>
<dbReference type="SMART" id="SM00271">
    <property type="entry name" value="DnaJ"/>
    <property type="match status" value="1"/>
</dbReference>
<dbReference type="SUPFAM" id="SSF46565">
    <property type="entry name" value="Chaperone J-domain"/>
    <property type="match status" value="1"/>
</dbReference>
<dbReference type="SUPFAM" id="SSF57938">
    <property type="entry name" value="DnaJ/Hsp40 cysteine-rich domain"/>
    <property type="match status" value="1"/>
</dbReference>
<dbReference type="SUPFAM" id="SSF49493">
    <property type="entry name" value="HSP40/DnaJ peptide-binding domain"/>
    <property type="match status" value="2"/>
</dbReference>
<dbReference type="PROSITE" id="PS00636">
    <property type="entry name" value="DNAJ_1"/>
    <property type="match status" value="1"/>
</dbReference>
<dbReference type="PROSITE" id="PS50076">
    <property type="entry name" value="DNAJ_2"/>
    <property type="match status" value="1"/>
</dbReference>
<dbReference type="PROSITE" id="PS51188">
    <property type="entry name" value="ZF_CR"/>
    <property type="match status" value="1"/>
</dbReference>
<accession>Q92J37</accession>
<name>DNAJ_RICCN</name>
<organism>
    <name type="scientific">Rickettsia conorii (strain ATCC VR-613 / Malish 7)</name>
    <dbReference type="NCBI Taxonomy" id="272944"/>
    <lineage>
        <taxon>Bacteria</taxon>
        <taxon>Pseudomonadati</taxon>
        <taxon>Pseudomonadota</taxon>
        <taxon>Alphaproteobacteria</taxon>
        <taxon>Rickettsiales</taxon>
        <taxon>Rickettsiaceae</taxon>
        <taxon>Rickettsieae</taxon>
        <taxon>Rickettsia</taxon>
        <taxon>spotted fever group</taxon>
    </lineage>
</organism>
<proteinExistence type="inferred from homology"/>
<feature type="chain" id="PRO_0000070871" description="Chaperone protein DnaJ">
    <location>
        <begin position="1"/>
        <end position="373"/>
    </location>
</feature>
<feature type="domain" description="J" evidence="1">
    <location>
        <begin position="4"/>
        <end position="68"/>
    </location>
</feature>
<feature type="repeat" description="CXXCXGXG motif">
    <location>
        <begin position="149"/>
        <end position="156"/>
    </location>
</feature>
<feature type="repeat" description="CXXCXGXG motif">
    <location>
        <begin position="166"/>
        <end position="173"/>
    </location>
</feature>
<feature type="repeat" description="CXXCXGXG motif">
    <location>
        <begin position="188"/>
        <end position="195"/>
    </location>
</feature>
<feature type="repeat" description="CXXCXGXG motif">
    <location>
        <begin position="202"/>
        <end position="209"/>
    </location>
</feature>
<feature type="zinc finger region" description="CR-type" evidence="1">
    <location>
        <begin position="136"/>
        <end position="214"/>
    </location>
</feature>
<feature type="binding site" evidence="1">
    <location>
        <position position="149"/>
    </location>
    <ligand>
        <name>Zn(2+)</name>
        <dbReference type="ChEBI" id="CHEBI:29105"/>
        <label>1</label>
    </ligand>
</feature>
<feature type="binding site" evidence="1">
    <location>
        <position position="152"/>
    </location>
    <ligand>
        <name>Zn(2+)</name>
        <dbReference type="ChEBI" id="CHEBI:29105"/>
        <label>1</label>
    </ligand>
</feature>
<feature type="binding site" evidence="1">
    <location>
        <position position="166"/>
    </location>
    <ligand>
        <name>Zn(2+)</name>
        <dbReference type="ChEBI" id="CHEBI:29105"/>
        <label>2</label>
    </ligand>
</feature>
<feature type="binding site" evidence="1">
    <location>
        <position position="169"/>
    </location>
    <ligand>
        <name>Zn(2+)</name>
        <dbReference type="ChEBI" id="CHEBI:29105"/>
        <label>2</label>
    </ligand>
</feature>
<feature type="binding site" evidence="1">
    <location>
        <position position="188"/>
    </location>
    <ligand>
        <name>Zn(2+)</name>
        <dbReference type="ChEBI" id="CHEBI:29105"/>
        <label>2</label>
    </ligand>
</feature>
<feature type="binding site" evidence="1">
    <location>
        <position position="191"/>
    </location>
    <ligand>
        <name>Zn(2+)</name>
        <dbReference type="ChEBI" id="CHEBI:29105"/>
        <label>2</label>
    </ligand>
</feature>
<feature type="binding site" evidence="1">
    <location>
        <position position="202"/>
    </location>
    <ligand>
        <name>Zn(2+)</name>
        <dbReference type="ChEBI" id="CHEBI:29105"/>
        <label>1</label>
    </ligand>
</feature>
<feature type="binding site" evidence="1">
    <location>
        <position position="205"/>
    </location>
    <ligand>
        <name>Zn(2+)</name>
        <dbReference type="ChEBI" id="CHEBI:29105"/>
        <label>1</label>
    </ligand>
</feature>
<protein>
    <recommendedName>
        <fullName evidence="1">Chaperone protein DnaJ</fullName>
    </recommendedName>
</protein>
<gene>
    <name evidence="1" type="primary">dnaJ</name>
    <name type="ordered locus">RC0232</name>
</gene>
<reference key="1">
    <citation type="journal article" date="2001" name="Science">
        <title>Mechanisms of evolution in Rickettsia conorii and R. prowazekii.</title>
        <authorList>
            <person name="Ogata H."/>
            <person name="Audic S."/>
            <person name="Renesto-Audiffren P."/>
            <person name="Fournier P.-E."/>
            <person name="Barbe V."/>
            <person name="Samson D."/>
            <person name="Roux V."/>
            <person name="Cossart P."/>
            <person name="Weissenbach J."/>
            <person name="Claverie J.-M."/>
            <person name="Raoult D."/>
        </authorList>
    </citation>
    <scope>NUCLEOTIDE SEQUENCE [LARGE SCALE GENOMIC DNA]</scope>
    <source>
        <strain>ATCC VR-613 / Malish 7</strain>
    </source>
</reference>
<sequence length="373" mass="41131">MSQNYYQILGVSKTASQADLKKAYLKLAKQYHPDTTDAKDAEKKFKEINAAYDVLKDEQKRAAYDRLGHDAFQNQQSRGGGGNHGGFHPDINDIFGDFFSDFMGGSRRSSRPTSAKVRGSDLKYNLTINLEEAFHGIEKNISFSSAVKCDTCHGSGSEKGETVTTCDACSGVGATRMQQGFFTIEQACHKCQGNGHIIKNPCKKCHGMGRYHKQRNLSVNIPAGVENGTRIRHTGEGEAGIRGGNSGDLYVDITIKPHDIYKVDGANLHCKLPISFVNAALGGEIEVPVIEGGKVNLTIPAGTQNGDQLRLRSKGMSKMRSTIRGDMLTHIHVEVPKNLSKRQRELLEEFKKESINEKENDGSFFNKMKSLWS</sequence>
<keyword id="KW-0143">Chaperone</keyword>
<keyword id="KW-0963">Cytoplasm</keyword>
<keyword id="KW-0235">DNA replication</keyword>
<keyword id="KW-0479">Metal-binding</keyword>
<keyword id="KW-0677">Repeat</keyword>
<keyword id="KW-0346">Stress response</keyword>
<keyword id="KW-0862">Zinc</keyword>
<keyword id="KW-0863">Zinc-finger</keyword>
<evidence type="ECO:0000255" key="1">
    <source>
        <dbReference type="HAMAP-Rule" id="MF_01152"/>
    </source>
</evidence>